<dbReference type="EC" id="2.7.11.32" evidence="1"/>
<dbReference type="EC" id="2.7.4.27" evidence="1"/>
<dbReference type="EMBL" id="CP001098">
    <property type="protein sequence ID" value="ACL69993.1"/>
    <property type="molecule type" value="Genomic_DNA"/>
</dbReference>
<dbReference type="RefSeq" id="WP_012636177.1">
    <property type="nucleotide sequence ID" value="NC_011899.1"/>
</dbReference>
<dbReference type="SMR" id="B8CXH4"/>
<dbReference type="STRING" id="373903.Hore_12430"/>
<dbReference type="KEGG" id="hor:Hore_12430"/>
<dbReference type="eggNOG" id="COG1806">
    <property type="taxonomic scope" value="Bacteria"/>
</dbReference>
<dbReference type="HOGENOM" id="CLU_046206_2_1_9"/>
<dbReference type="OrthoDB" id="9782201at2"/>
<dbReference type="Proteomes" id="UP000000719">
    <property type="component" value="Chromosome"/>
</dbReference>
<dbReference type="GO" id="GO:0043531">
    <property type="term" value="F:ADP binding"/>
    <property type="evidence" value="ECO:0007669"/>
    <property type="project" value="UniProtKB-UniRule"/>
</dbReference>
<dbReference type="GO" id="GO:0005524">
    <property type="term" value="F:ATP binding"/>
    <property type="evidence" value="ECO:0007669"/>
    <property type="project" value="InterPro"/>
</dbReference>
<dbReference type="GO" id="GO:0016776">
    <property type="term" value="F:phosphotransferase activity, phosphate group as acceptor"/>
    <property type="evidence" value="ECO:0007669"/>
    <property type="project" value="UniProtKB-UniRule"/>
</dbReference>
<dbReference type="GO" id="GO:0004674">
    <property type="term" value="F:protein serine/threonine kinase activity"/>
    <property type="evidence" value="ECO:0007669"/>
    <property type="project" value="UniProtKB-UniRule"/>
</dbReference>
<dbReference type="HAMAP" id="MF_00921">
    <property type="entry name" value="PDRP"/>
    <property type="match status" value="1"/>
</dbReference>
<dbReference type="InterPro" id="IPR005177">
    <property type="entry name" value="Kinase-pyrophosphorylase"/>
</dbReference>
<dbReference type="InterPro" id="IPR026565">
    <property type="entry name" value="PPDK_reg"/>
</dbReference>
<dbReference type="NCBIfam" id="NF003742">
    <property type="entry name" value="PRK05339.1"/>
    <property type="match status" value="1"/>
</dbReference>
<dbReference type="PANTHER" id="PTHR31756">
    <property type="entry name" value="PYRUVATE, PHOSPHATE DIKINASE REGULATORY PROTEIN 1, CHLOROPLASTIC"/>
    <property type="match status" value="1"/>
</dbReference>
<dbReference type="PANTHER" id="PTHR31756:SF3">
    <property type="entry name" value="PYRUVATE, PHOSPHATE DIKINASE REGULATORY PROTEIN 1, CHLOROPLASTIC"/>
    <property type="match status" value="1"/>
</dbReference>
<dbReference type="Pfam" id="PF03618">
    <property type="entry name" value="Kinase-PPPase"/>
    <property type="match status" value="1"/>
</dbReference>
<feature type="chain" id="PRO_1000213454" description="Putative pyruvate, phosphate dikinase regulatory protein">
    <location>
        <begin position="1"/>
        <end position="266"/>
    </location>
</feature>
<feature type="binding site" evidence="1">
    <location>
        <begin position="149"/>
        <end position="156"/>
    </location>
    <ligand>
        <name>ADP</name>
        <dbReference type="ChEBI" id="CHEBI:456216"/>
    </ligand>
</feature>
<reference key="1">
    <citation type="journal article" date="2009" name="PLoS ONE">
        <title>Genome analysis of the anaerobic thermohalophilic bacterium Halothermothrix orenii.</title>
        <authorList>
            <person name="Mavromatis K."/>
            <person name="Ivanova N."/>
            <person name="Anderson I."/>
            <person name="Lykidis A."/>
            <person name="Hooper S.D."/>
            <person name="Sun H."/>
            <person name="Kunin V."/>
            <person name="Lapidus A."/>
            <person name="Hugenholtz P."/>
            <person name="Patel B."/>
            <person name="Kyrpides N.C."/>
        </authorList>
    </citation>
    <scope>NUCLEOTIDE SEQUENCE [LARGE SCALE GENOMIC DNA]</scope>
    <source>
        <strain>H 168 / OCM 544 / DSM 9562</strain>
    </source>
</reference>
<gene>
    <name type="ordered locus">Hore_12430</name>
</gene>
<comment type="function">
    <text evidence="1">Bifunctional serine/threonine kinase and phosphorylase involved in the regulation of the pyruvate, phosphate dikinase (PPDK) by catalyzing its phosphorylation/dephosphorylation.</text>
</comment>
<comment type="catalytic activity">
    <reaction evidence="1">
        <text>N(tele)-phospho-L-histidyl/L-threonyl-[pyruvate, phosphate dikinase] + ADP = N(tele)-phospho-L-histidyl/O-phospho-L-threonyl-[pyruvate, phosphate dikinase] + AMP + H(+)</text>
        <dbReference type="Rhea" id="RHEA:43692"/>
        <dbReference type="Rhea" id="RHEA-COMP:10650"/>
        <dbReference type="Rhea" id="RHEA-COMP:10651"/>
        <dbReference type="ChEBI" id="CHEBI:15378"/>
        <dbReference type="ChEBI" id="CHEBI:30013"/>
        <dbReference type="ChEBI" id="CHEBI:61977"/>
        <dbReference type="ChEBI" id="CHEBI:83586"/>
        <dbReference type="ChEBI" id="CHEBI:456215"/>
        <dbReference type="ChEBI" id="CHEBI:456216"/>
        <dbReference type="EC" id="2.7.11.32"/>
    </reaction>
</comment>
<comment type="catalytic activity">
    <reaction evidence="1">
        <text>N(tele)-phospho-L-histidyl/O-phospho-L-threonyl-[pyruvate, phosphate dikinase] + phosphate + H(+) = N(tele)-phospho-L-histidyl/L-threonyl-[pyruvate, phosphate dikinase] + diphosphate</text>
        <dbReference type="Rhea" id="RHEA:43696"/>
        <dbReference type="Rhea" id="RHEA-COMP:10650"/>
        <dbReference type="Rhea" id="RHEA-COMP:10651"/>
        <dbReference type="ChEBI" id="CHEBI:15378"/>
        <dbReference type="ChEBI" id="CHEBI:30013"/>
        <dbReference type="ChEBI" id="CHEBI:33019"/>
        <dbReference type="ChEBI" id="CHEBI:43474"/>
        <dbReference type="ChEBI" id="CHEBI:61977"/>
        <dbReference type="ChEBI" id="CHEBI:83586"/>
        <dbReference type="EC" id="2.7.4.27"/>
    </reaction>
</comment>
<comment type="similarity">
    <text evidence="1">Belongs to the pyruvate, phosphate/water dikinase regulatory protein family. PDRP subfamily.</text>
</comment>
<organism>
    <name type="scientific">Halothermothrix orenii (strain H 168 / OCM 544 / DSM 9562)</name>
    <dbReference type="NCBI Taxonomy" id="373903"/>
    <lineage>
        <taxon>Bacteria</taxon>
        <taxon>Bacillati</taxon>
        <taxon>Bacillota</taxon>
        <taxon>Clostridia</taxon>
        <taxon>Halanaerobiales</taxon>
        <taxon>Halothermotrichaceae</taxon>
        <taxon>Halothermothrix</taxon>
    </lineage>
</organism>
<keyword id="KW-0418">Kinase</keyword>
<keyword id="KW-0547">Nucleotide-binding</keyword>
<keyword id="KW-1185">Reference proteome</keyword>
<keyword id="KW-0723">Serine/threonine-protein kinase</keyword>
<keyword id="KW-0808">Transferase</keyword>
<proteinExistence type="inferred from homology"/>
<protein>
    <recommendedName>
        <fullName evidence="1">Putative pyruvate, phosphate dikinase regulatory protein</fullName>
        <shortName evidence="1">PPDK regulatory protein</shortName>
        <ecNumber evidence="1">2.7.11.32</ecNumber>
        <ecNumber evidence="1">2.7.4.27</ecNumber>
    </recommendedName>
</protein>
<name>PDRP_HALOH</name>
<evidence type="ECO:0000255" key="1">
    <source>
        <dbReference type="HAMAP-Rule" id="MF_00921"/>
    </source>
</evidence>
<sequence length="266" mass="30366">MTEKPRIFIVSDSIGETAQYVVDATVSQFNGYLDSKRFSYVQTTRELNNIIKKATEQKTLIAYTLIDPRLREEIATLARKNNIYAVDIMGPMMEAFEEFFQKKPRLQPGLVHRLDKDYFKRVEAMEFTVKYDDSNDDRGVKEADVVLIGVSRTSKTPMCIYLSYRGYKAANIPLVPEVEPTPLIYENPDNKVIGLTIDPLLLNEIRQERLKSLGIDPESSYASIDRINVELEYAEKTMEKIGCPVIDVTNKSIEESANEVIDYLNG</sequence>
<accession>B8CXH4</accession>